<protein>
    <recommendedName>
        <fullName>DNA-directed RNA polymerase II subunit rpb3</fullName>
        <shortName>RNA polymerase II subunit 3</shortName>
        <shortName>RNA polymerase II subunit B3</shortName>
    </recommendedName>
    <alternativeName>
        <fullName>DNA-directed RNA polymerase II subunit C</fullName>
    </alternativeName>
</protein>
<proteinExistence type="inferred from homology"/>
<organism>
    <name type="scientific">Dictyostelium discoideum</name>
    <name type="common">Social amoeba</name>
    <dbReference type="NCBI Taxonomy" id="44689"/>
    <lineage>
        <taxon>Eukaryota</taxon>
        <taxon>Amoebozoa</taxon>
        <taxon>Evosea</taxon>
        <taxon>Eumycetozoa</taxon>
        <taxon>Dictyostelia</taxon>
        <taxon>Dictyosteliales</taxon>
        <taxon>Dictyosteliaceae</taxon>
        <taxon>Dictyostelium</taxon>
    </lineage>
</organism>
<gene>
    <name type="primary">polr2c</name>
    <name type="synonym">rpb3</name>
    <name type="ORF">DDB_G0292244</name>
</gene>
<name>RPB3_DICDI</name>
<keyword id="KW-0240">DNA-directed RNA polymerase</keyword>
<keyword id="KW-0539">Nucleus</keyword>
<keyword id="KW-1185">Reference proteome</keyword>
<keyword id="KW-0804">Transcription</keyword>
<feature type="chain" id="PRO_0000329307" description="DNA-directed RNA polymerase II subunit rpb3">
    <location>
        <begin position="1"/>
        <end position="302"/>
    </location>
</feature>
<accession>Q54DH7</accession>
<comment type="function">
    <text evidence="1">DNA-dependent RNA polymerase catalyzes the transcription of DNA into RNA using the four ribonucleoside triphosphates as substrates. Component of RNA polymerase II which synthesizes mRNA precursors and many functional non-coding RNAs. Pol II is the central component of the basal RNA polymerase II transcription machinery. It is composed of mobile elements that move relative to each other. Rpb3 is part of the core element with the central large cleft and the clamp element that moves to open and close the cleft (By similarity).</text>
</comment>
<comment type="subunit">
    <text evidence="1">Component of the RNA polymerase II (Pol II) complex consisting of 12 subunits.</text>
</comment>
<comment type="subcellular location">
    <subcellularLocation>
        <location evidence="1">Nucleus</location>
    </subcellularLocation>
</comment>
<comment type="similarity">
    <text evidence="2">Belongs to the archaeal Rpo3/eukaryotic RPB3 RNA polymerase subunit family.</text>
</comment>
<evidence type="ECO:0000250" key="1"/>
<evidence type="ECO:0000305" key="2"/>
<reference key="1">
    <citation type="journal article" date="2005" name="Nature">
        <title>The genome of the social amoeba Dictyostelium discoideum.</title>
        <authorList>
            <person name="Eichinger L."/>
            <person name="Pachebat J.A."/>
            <person name="Gloeckner G."/>
            <person name="Rajandream M.A."/>
            <person name="Sucgang R."/>
            <person name="Berriman M."/>
            <person name="Song J."/>
            <person name="Olsen R."/>
            <person name="Szafranski K."/>
            <person name="Xu Q."/>
            <person name="Tunggal B."/>
            <person name="Kummerfeld S."/>
            <person name="Madera M."/>
            <person name="Konfortov B.A."/>
            <person name="Rivero F."/>
            <person name="Bankier A.T."/>
            <person name="Lehmann R."/>
            <person name="Hamlin N."/>
            <person name="Davies R."/>
            <person name="Gaudet P."/>
            <person name="Fey P."/>
            <person name="Pilcher K."/>
            <person name="Chen G."/>
            <person name="Saunders D."/>
            <person name="Sodergren E.J."/>
            <person name="Davis P."/>
            <person name="Kerhornou A."/>
            <person name="Nie X."/>
            <person name="Hall N."/>
            <person name="Anjard C."/>
            <person name="Hemphill L."/>
            <person name="Bason N."/>
            <person name="Farbrother P."/>
            <person name="Desany B."/>
            <person name="Just E."/>
            <person name="Morio T."/>
            <person name="Rost R."/>
            <person name="Churcher C.M."/>
            <person name="Cooper J."/>
            <person name="Haydock S."/>
            <person name="van Driessche N."/>
            <person name="Cronin A."/>
            <person name="Goodhead I."/>
            <person name="Muzny D.M."/>
            <person name="Mourier T."/>
            <person name="Pain A."/>
            <person name="Lu M."/>
            <person name="Harper D."/>
            <person name="Lindsay R."/>
            <person name="Hauser H."/>
            <person name="James K.D."/>
            <person name="Quiles M."/>
            <person name="Madan Babu M."/>
            <person name="Saito T."/>
            <person name="Buchrieser C."/>
            <person name="Wardroper A."/>
            <person name="Felder M."/>
            <person name="Thangavelu M."/>
            <person name="Johnson D."/>
            <person name="Knights A."/>
            <person name="Loulseged H."/>
            <person name="Mungall K.L."/>
            <person name="Oliver K."/>
            <person name="Price C."/>
            <person name="Quail M.A."/>
            <person name="Urushihara H."/>
            <person name="Hernandez J."/>
            <person name="Rabbinowitsch E."/>
            <person name="Steffen D."/>
            <person name="Sanders M."/>
            <person name="Ma J."/>
            <person name="Kohara Y."/>
            <person name="Sharp S."/>
            <person name="Simmonds M.N."/>
            <person name="Spiegler S."/>
            <person name="Tivey A."/>
            <person name="Sugano S."/>
            <person name="White B."/>
            <person name="Walker D."/>
            <person name="Woodward J.R."/>
            <person name="Winckler T."/>
            <person name="Tanaka Y."/>
            <person name="Shaulsky G."/>
            <person name="Schleicher M."/>
            <person name="Weinstock G.M."/>
            <person name="Rosenthal A."/>
            <person name="Cox E.C."/>
            <person name="Chisholm R.L."/>
            <person name="Gibbs R.A."/>
            <person name="Loomis W.F."/>
            <person name="Platzer M."/>
            <person name="Kay R.R."/>
            <person name="Williams J.G."/>
            <person name="Dear P.H."/>
            <person name="Noegel A.A."/>
            <person name="Barrell B.G."/>
            <person name="Kuspa A."/>
        </authorList>
    </citation>
    <scope>NUCLEOTIDE SEQUENCE [LARGE SCALE GENOMIC DNA]</scope>
    <source>
        <strain>AX4</strain>
    </source>
</reference>
<dbReference type="EMBL" id="AAFI02000188">
    <property type="protein sequence ID" value="EAL61332.1"/>
    <property type="molecule type" value="Genomic_DNA"/>
</dbReference>
<dbReference type="RefSeq" id="XP_629750.1">
    <property type="nucleotide sequence ID" value="XM_629748.1"/>
</dbReference>
<dbReference type="SMR" id="Q54DH7"/>
<dbReference type="FunCoup" id="Q54DH7">
    <property type="interactions" value="608"/>
</dbReference>
<dbReference type="STRING" id="44689.Q54DH7"/>
<dbReference type="PaxDb" id="44689-DDB0216289"/>
<dbReference type="EnsemblProtists" id="EAL61332">
    <property type="protein sequence ID" value="EAL61332"/>
    <property type="gene ID" value="DDB_G0292244"/>
</dbReference>
<dbReference type="GeneID" id="8628579"/>
<dbReference type="KEGG" id="ddi:DDB_G0292244"/>
<dbReference type="dictyBase" id="DDB_G0292244">
    <property type="gene designation" value="rpb3"/>
</dbReference>
<dbReference type="VEuPathDB" id="AmoebaDB:DDB_G0292244"/>
<dbReference type="eggNOG" id="KOG1522">
    <property type="taxonomic scope" value="Eukaryota"/>
</dbReference>
<dbReference type="HOGENOM" id="CLU_038421_3_0_1"/>
<dbReference type="InParanoid" id="Q54DH7"/>
<dbReference type="OMA" id="FYFEVES"/>
<dbReference type="PhylomeDB" id="Q54DH7"/>
<dbReference type="Reactome" id="R-DDI-113418">
    <property type="pathway name" value="Formation of the Early Elongation Complex"/>
</dbReference>
<dbReference type="Reactome" id="R-DDI-674695">
    <property type="pathway name" value="RNA Polymerase II Pre-transcription Events"/>
</dbReference>
<dbReference type="Reactome" id="R-DDI-6781823">
    <property type="pathway name" value="Formation of TC-NER Pre-Incision Complex"/>
</dbReference>
<dbReference type="Reactome" id="R-DDI-6782135">
    <property type="pathway name" value="Dual incision in TC-NER"/>
</dbReference>
<dbReference type="Reactome" id="R-DDI-6782210">
    <property type="pathway name" value="Gap-filling DNA repair synthesis and ligation in TC-NER"/>
</dbReference>
<dbReference type="Reactome" id="R-DDI-6796648">
    <property type="pathway name" value="TP53 Regulates Transcription of DNA Repair Genes"/>
</dbReference>
<dbReference type="Reactome" id="R-DDI-6807505">
    <property type="pathway name" value="RNA polymerase II transcribes snRNA genes"/>
</dbReference>
<dbReference type="Reactome" id="R-DDI-72086">
    <property type="pathway name" value="mRNA Capping"/>
</dbReference>
<dbReference type="Reactome" id="R-DDI-72163">
    <property type="pathway name" value="mRNA Splicing - Major Pathway"/>
</dbReference>
<dbReference type="Reactome" id="R-DDI-72203">
    <property type="pathway name" value="Processing of Capped Intron-Containing Pre-mRNA"/>
</dbReference>
<dbReference type="Reactome" id="R-DDI-73776">
    <property type="pathway name" value="RNA Polymerase II Promoter Escape"/>
</dbReference>
<dbReference type="Reactome" id="R-DDI-73779">
    <property type="pathway name" value="RNA Polymerase II Transcription Pre-Initiation And Promoter Opening"/>
</dbReference>
<dbReference type="Reactome" id="R-DDI-75953">
    <property type="pathway name" value="RNA Polymerase II Transcription Initiation"/>
</dbReference>
<dbReference type="Reactome" id="R-DDI-76042">
    <property type="pathway name" value="RNA Polymerase II Transcription Initiation And Promoter Clearance"/>
</dbReference>
<dbReference type="Reactome" id="R-DDI-77075">
    <property type="pathway name" value="RNA Pol II CTD phosphorylation and interaction with CE"/>
</dbReference>
<dbReference type="Reactome" id="R-DDI-9018519">
    <property type="pathway name" value="Estrogen-dependent gene expression"/>
</dbReference>
<dbReference type="PRO" id="PR:Q54DH7"/>
<dbReference type="Proteomes" id="UP000002195">
    <property type="component" value="Chromosome 6"/>
</dbReference>
<dbReference type="GO" id="GO:0005665">
    <property type="term" value="C:RNA polymerase II, core complex"/>
    <property type="evidence" value="ECO:0000250"/>
    <property type="project" value="dictyBase"/>
</dbReference>
<dbReference type="GO" id="GO:0003899">
    <property type="term" value="F:DNA-directed RNA polymerase activity"/>
    <property type="evidence" value="ECO:0000250"/>
    <property type="project" value="dictyBase"/>
</dbReference>
<dbReference type="GO" id="GO:0046983">
    <property type="term" value="F:protein dimerization activity"/>
    <property type="evidence" value="ECO:0007669"/>
    <property type="project" value="InterPro"/>
</dbReference>
<dbReference type="GO" id="GO:0006366">
    <property type="term" value="P:transcription by RNA polymerase II"/>
    <property type="evidence" value="ECO:0000250"/>
    <property type="project" value="dictyBase"/>
</dbReference>
<dbReference type="CDD" id="cd07031">
    <property type="entry name" value="RNAP_II_RPB3"/>
    <property type="match status" value="1"/>
</dbReference>
<dbReference type="FunFam" id="2.170.120.12:FF:000002">
    <property type="entry name" value="DNA-directed RNA polymerase II subunit RPB3"/>
    <property type="match status" value="1"/>
</dbReference>
<dbReference type="Gene3D" id="3.30.70.20">
    <property type="match status" value="1"/>
</dbReference>
<dbReference type="Gene3D" id="2.170.120.12">
    <property type="entry name" value="DNA-directed RNA polymerase, insert domain"/>
    <property type="match status" value="1"/>
</dbReference>
<dbReference type="Gene3D" id="3.30.1360.10">
    <property type="entry name" value="RNA polymerase, RBP11-like subunit"/>
    <property type="match status" value="1"/>
</dbReference>
<dbReference type="HAMAP" id="MF_00320">
    <property type="entry name" value="RNApol_arch_Rpo3"/>
    <property type="match status" value="1"/>
</dbReference>
<dbReference type="InterPro" id="IPR011262">
    <property type="entry name" value="DNA-dir_RNA_pol_insert"/>
</dbReference>
<dbReference type="InterPro" id="IPR011263">
    <property type="entry name" value="DNA-dir_RNA_pol_RpoA/D/Rpb3"/>
</dbReference>
<dbReference type="InterPro" id="IPR036603">
    <property type="entry name" value="RBP11-like"/>
</dbReference>
<dbReference type="InterPro" id="IPR022842">
    <property type="entry name" value="RNAP_Rpo3/Rpb3/RPAC1"/>
</dbReference>
<dbReference type="InterPro" id="IPR036643">
    <property type="entry name" value="RNApol_insert_sf"/>
</dbReference>
<dbReference type="InterPro" id="IPR050518">
    <property type="entry name" value="Rpo3/RPB3_RNA_Pol_subunit"/>
</dbReference>
<dbReference type="NCBIfam" id="NF001988">
    <property type="entry name" value="PRK00783.1"/>
    <property type="match status" value="1"/>
</dbReference>
<dbReference type="PANTHER" id="PTHR11800">
    <property type="entry name" value="DNA-DIRECTED RNA POLYMERASE"/>
    <property type="match status" value="1"/>
</dbReference>
<dbReference type="PANTHER" id="PTHR11800:SF2">
    <property type="entry name" value="DNA-DIRECTED RNA POLYMERASE II SUBUNIT RPB3"/>
    <property type="match status" value="1"/>
</dbReference>
<dbReference type="Pfam" id="PF01000">
    <property type="entry name" value="RNA_pol_A_bac"/>
    <property type="match status" value="1"/>
</dbReference>
<dbReference type="Pfam" id="PF01193">
    <property type="entry name" value="RNA_pol_L"/>
    <property type="match status" value="1"/>
</dbReference>
<dbReference type="SMART" id="SM00662">
    <property type="entry name" value="RPOLD"/>
    <property type="match status" value="1"/>
</dbReference>
<dbReference type="SUPFAM" id="SSF56553">
    <property type="entry name" value="Insert subdomain of RNA polymerase alpha subunit"/>
    <property type="match status" value="1"/>
</dbReference>
<dbReference type="SUPFAM" id="SSF55257">
    <property type="entry name" value="RBP11-like subunits of RNA polymerase"/>
    <property type="match status" value="1"/>
</dbReference>
<sequence>MSQTVSQLTRQPELEILEIKNDSIIFILSNTDISVANALRRVMIAEVPTMCIDLVEFESNNSVLCDEFIAHRLGLIPLVSDNIDKFCYTRDCSCSDRCDQCSVELRLNVKCTENRPRDVTSSDLLSQNSAVIPVSSQVTSSNSEQEIPIVKLRRGQEIKLRAIAKKGVGKEHAKWSPSCVATYQFQPIIVLNQNRIDELTDQQKEEWVGSCPTKVYSYSPHQSTQQVTIEDPLRCVYCLECKKKAESFGKPDLVHLEQKQDKFIFTVESSGALKPEDIVLYAIQIIKRKLTDIQGQMAEGML</sequence>